<reference key="1">
    <citation type="journal article" date="2012" name="J. Exp. Bot.">
        <title>A peroxisomally localized acyl-activating enzyme is required for volatile benzenoid formation in a Petuniaxhybrida cv. 'Mitchell Diploid' flower.</title>
        <authorList>
            <person name="Colquhoun T.A."/>
            <person name="Marciniak D.M."/>
            <person name="Wedde A.E."/>
            <person name="Kim J.Y."/>
            <person name="Schwieterman M.L."/>
            <person name="Levin L.A."/>
            <person name="Van Moerkercke A."/>
            <person name="Schuurink R.C."/>
            <person name="Clark D.G."/>
        </authorList>
    </citation>
    <scope>NUCLEOTIDE SEQUENCE [MRNA] (ISOFORM 2)</scope>
    <scope>FUNCTION</scope>
    <scope>DISRUPTION PHENOTYPE</scope>
    <scope>CATALYTIC ACTIVITY</scope>
    <scope>TISSUE SPECIFICITY</scope>
    <scope>DEVELOPMENTAL STAGE</scope>
    <scope>REPRESSION BY ETHYLENE</scope>
    <scope>SUBCELLULAR LOCATION</scope>
    <source>
        <strain>cv. Mitchell</strain>
    </source>
</reference>
<reference key="2">
    <citation type="journal article" date="2012" name="Plant Cell">
        <title>Contribution of CoA ligases to benzenoid biosynthesis in petunia flowers.</title>
        <authorList>
            <person name="Klempien A."/>
            <person name="Kaminaga Y."/>
            <person name="Qualley A."/>
            <person name="Nagegowda D.A."/>
            <person name="Widhalm J.R."/>
            <person name="Orlova I."/>
            <person name="Shasany A.K."/>
            <person name="Taguchi G."/>
            <person name="Kish C.M."/>
            <person name="Cooper B.R."/>
            <person name="D'Auria J.C."/>
            <person name="Rhodes D."/>
            <person name="Pichersky E."/>
            <person name="Dudareva N."/>
        </authorList>
    </citation>
    <scope>NUCLEOTIDE SEQUENCE [MRNA] (ISOFORM 1)</scope>
    <scope>FUNCTION</scope>
    <scope>DISRUPTION PHENOTYPE</scope>
    <scope>CATALYTIC ACTIVITY</scope>
    <scope>PATHWAY</scope>
    <scope>TISSUE SPECIFICITY</scope>
    <scope>SUBCELLULAR LOCATION</scope>
    <scope>INDUCTION</scope>
    <scope>SUBUNIT</scope>
    <scope>BIOPHYSICOCHEMICAL PROPERTIES</scope>
    <scope>COFACTOR</scope>
    <source>
        <strain>cv. Mitchell</strain>
    </source>
</reference>
<protein>
    <recommendedName>
        <fullName evidence="6">Trans-cinnamate:CoA ligase, peroxisomal</fullName>
        <shortName evidence="4">Cinnamic acid:CoA ligase</shortName>
        <shortName evidence="4">Ph-CNL</shortName>
        <shortName evidence="4">PhCNL</shortName>
        <ecNumber evidence="2 3">6.2.1.-</ecNumber>
    </recommendedName>
    <alternativeName>
        <fullName evidence="6">(E)-caffeate:CoA ligase CNL</fullName>
        <ecNumber evidence="2">6.2.1.-</ecNumber>
    </alternativeName>
    <alternativeName>
        <fullName evidence="4">4-coumarate:CoA ligase CNL</fullName>
        <ecNumber evidence="2 3">6.2.1.12</ecNumber>
    </alternativeName>
    <alternativeName>
        <fullName evidence="5">Protein ACYL-ACTIVATING ENZYME</fullName>
        <shortName evidence="5">PhAAE</shortName>
    </alternativeName>
</protein>
<gene>
    <name evidence="4" type="primary">CNL</name>
    <name evidence="5" type="synonym">AAE</name>
</gene>
<keyword id="KW-0025">Alternative splicing</keyword>
<keyword id="KW-0067">ATP-binding</keyword>
<keyword id="KW-0436">Ligase</keyword>
<keyword id="KW-0547">Nucleotide-binding</keyword>
<keyword id="KW-0576">Peroxisome</keyword>
<keyword id="KW-0587">Phenylpropanoid metabolism</keyword>
<organism>
    <name type="scientific">Petunia hybrida</name>
    <name type="common">Petunia</name>
    <dbReference type="NCBI Taxonomy" id="4102"/>
    <lineage>
        <taxon>Eukaryota</taxon>
        <taxon>Viridiplantae</taxon>
        <taxon>Streptophyta</taxon>
        <taxon>Embryophyta</taxon>
        <taxon>Tracheophyta</taxon>
        <taxon>Spermatophyta</taxon>
        <taxon>Magnoliopsida</taxon>
        <taxon>eudicotyledons</taxon>
        <taxon>Gunneridae</taxon>
        <taxon>Pentapetalae</taxon>
        <taxon>asterids</taxon>
        <taxon>lamiids</taxon>
        <taxon>Solanales</taxon>
        <taxon>Solanaceae</taxon>
        <taxon>Petunioideae</taxon>
        <taxon>Petunia</taxon>
    </lineage>
</organism>
<feature type="chain" id="PRO_0000451514" description="Trans-cinnamate:CoA ligase, peroxisomal">
    <location>
        <begin position="1"/>
        <end position="570"/>
    </location>
</feature>
<feature type="short sequence motif" description="Microbody targeting signal" evidence="1">
    <location>
        <begin position="568"/>
        <end position="570"/>
    </location>
</feature>
<feature type="splice variant" id="VSP_060792" description="In isoform 2.">
    <original>C</original>
    <variation>L</variation>
    <location>
        <position position="512"/>
    </location>
</feature>
<feature type="splice variant" id="VSP_060793" description="In isoform 2.">
    <location>
        <begin position="513"/>
        <end position="570"/>
    </location>
</feature>
<feature type="sequence conflict" description="In Ref. 1; AFK25809." evidence="6" ref="1">
    <original>L</original>
    <variation>F</variation>
    <location>
        <position position="429"/>
    </location>
</feature>
<comment type="function">
    <text evidence="2 3">Involved in the biosynthesis of floral volatile benzenoid/phenylpropanoid (FVBP) scent (e.g. benzylbenzoate, phenylethylbenzoate, and methylbenzoate) (PubMed:22649270, PubMed:22771854). Catalyzes the formation of CoA esters of cinnamic acid, and, with lower efficiency, of 4-coumaric acid and caffeic acid (PubMed:22649270).</text>
</comment>
<comment type="catalytic activity">
    <reaction evidence="2">
        <text>(E)-4-coumarate + ATP + CoA = (E)-4-coumaroyl-CoA + AMP + diphosphate</text>
        <dbReference type="Rhea" id="RHEA:19641"/>
        <dbReference type="ChEBI" id="CHEBI:12876"/>
        <dbReference type="ChEBI" id="CHEBI:30616"/>
        <dbReference type="ChEBI" id="CHEBI:33019"/>
        <dbReference type="ChEBI" id="CHEBI:57287"/>
        <dbReference type="ChEBI" id="CHEBI:85008"/>
        <dbReference type="ChEBI" id="CHEBI:456215"/>
        <dbReference type="EC" id="6.2.1.12"/>
    </reaction>
    <physiologicalReaction direction="left-to-right" evidence="2">
        <dbReference type="Rhea" id="RHEA:19642"/>
    </physiologicalReaction>
</comment>
<comment type="catalytic activity">
    <reaction evidence="2">
        <text>(E)-caffeate + ATP + CoA = (E)-caffeoyl-CoA + AMP + diphosphate</text>
        <dbReference type="Rhea" id="RHEA:36299"/>
        <dbReference type="ChEBI" id="CHEBI:30616"/>
        <dbReference type="ChEBI" id="CHEBI:33019"/>
        <dbReference type="ChEBI" id="CHEBI:57287"/>
        <dbReference type="ChEBI" id="CHEBI:57770"/>
        <dbReference type="ChEBI" id="CHEBI:87136"/>
        <dbReference type="ChEBI" id="CHEBI:456215"/>
    </reaction>
    <physiologicalReaction direction="left-to-right" evidence="2">
        <dbReference type="Rhea" id="RHEA:36300"/>
    </physiologicalReaction>
</comment>
<comment type="catalytic activity">
    <reaction evidence="2">
        <text>(E)-cinnamate + ATP + CoA = (E)-cinnamoyl-CoA + AMP + diphosphate</text>
        <dbReference type="Rhea" id="RHEA:64788"/>
        <dbReference type="ChEBI" id="CHEBI:15669"/>
        <dbReference type="ChEBI" id="CHEBI:30616"/>
        <dbReference type="ChEBI" id="CHEBI:33019"/>
        <dbReference type="ChEBI" id="CHEBI:57252"/>
        <dbReference type="ChEBI" id="CHEBI:57287"/>
        <dbReference type="ChEBI" id="CHEBI:456215"/>
    </reaction>
    <physiologicalReaction direction="left-to-right" evidence="2">
        <dbReference type="Rhea" id="RHEA:64789"/>
    </physiologicalReaction>
</comment>
<comment type="cofactor">
    <cofactor evidence="2">
        <name>K(+)</name>
        <dbReference type="ChEBI" id="CHEBI:29103"/>
    </cofactor>
</comment>
<comment type="biophysicochemical properties">
    <kinetics>
        <KM evidence="2">285.7 uM for trans-cinnamic acid</KM>
        <KM evidence="2">550.4 uM for 4-coumaric acid</KM>
        <KM evidence="2">1024.4 uM for caffeic acid</KM>
        <KM evidence="2">775.2 uM for CoA</KM>
        <Vmax evidence="2">7401.7 pmol/sec/mg enzyme with trans-cinnamic acid as substrate</Vmax>
        <Vmax evidence="2">3890.7 pmol/sec/mg enzyme with 4-coumaric acid as substrate</Vmax>
        <Vmax evidence="2">3742.7 pmol/sec/mg enzyme with caffeic acid as substrate</Vmax>
        <Vmax evidence="2">7179.7 pmol/sec/mg enzyme with CoA acid as substrate</Vmax>
        <text evidence="2">kcat is 0.472 sec(-1) with trans-cinnamic acid as substrate (PubMed:22649270). kcat is 0.248 sec(-1) with 4-coumaric acid as substrate (PubMed:22649270). kcat is 0.238 sec(-1) with caffeic acid as substrate (PubMed:22649270). kcat is 0.458 sec(-1) with CoA as substrate (PubMed:22649270).</text>
    </kinetics>
    <phDependence>
        <text evidence="2">Optimum pH is 8 with cinnamic acid as a substrate.</text>
    </phDependence>
</comment>
<comment type="pathway">
    <text evidence="2">Phenylpropanoid metabolism; trans-cinnamate biosynthesis.</text>
</comment>
<comment type="pathway">
    <text evidence="2">Phytoalexin biosynthesis; 3,4',5-trihydroxystilbene biosynthesis; 3,4',5-trihydroxystilbene from trans-4-coumarate: step 1/2.</text>
</comment>
<comment type="subunit">
    <text evidence="2">Monomer.</text>
</comment>
<comment type="subcellular location">
    <subcellularLocation>
        <location evidence="2 3">Peroxisome</location>
    </subcellularLocation>
    <text evidence="3">Located in the peroxisomes of flower petal limb cells.</text>
</comment>
<comment type="alternative products">
    <event type="alternative splicing"/>
    <isoform>
        <id>I3PB36-1</id>
        <name>1</name>
        <sequence type="displayed"/>
    </isoform>
    <isoform>
        <id>I3PB36-2</id>
        <name>2</name>
        <sequence type="described" ref="VSP_060792 VSP_060793"/>
    </isoform>
</comment>
<comment type="tissue specificity">
    <text evidence="2 3">Mostly expressed in flower organs, with highest levels in corollas and petal limbs, and, to a lesser extent, in petal tubes, sepals, pistils, stamen, stigma, anthers and ovaries (PubMed:22649270, PubMed:22771854). Also present at low levels in leaves, stems and roots (PubMed:22649270, PubMed:22771854).</text>
</comment>
<comment type="developmental stage">
    <text evidence="3">Accumulates during flower development with highest levels in open flowers, and fades out as flowers are senescing.</text>
</comment>
<comment type="induction">
    <text evidence="2 3">Circadian-regulation with peak levels occurring late afternoon (e.g. 3 to 7 pm) (PubMed:22649270). Repressed by ethylene, especially in senescing flowers (PubMed:22771854).</text>
</comment>
<comment type="disruption phenotype">
    <text evidence="2 3">Disturbed benzenoid scent profile in flowers characterized by a decreased emission of benzylbenzoate, phenylethylbenzoate, and methylbenzoate.</text>
</comment>
<comment type="similarity">
    <text evidence="6">Belongs to the ATP-dependent AMP-binding enzyme family.</text>
</comment>
<name>CNL_PETHY</name>
<dbReference type="EC" id="6.2.1.-" evidence="2 3"/>
<dbReference type="EC" id="6.2.1.12" evidence="2 3"/>
<dbReference type="EMBL" id="JQ031717">
    <property type="protein sequence ID" value="AFK25809.1"/>
    <property type="molecule type" value="mRNA"/>
</dbReference>
<dbReference type="EMBL" id="JN120848">
    <property type="protein sequence ID" value="AEO52693.1"/>
    <property type="molecule type" value="mRNA"/>
</dbReference>
<dbReference type="SMR" id="I3PB36"/>
<dbReference type="BioCyc" id="MetaCyc:MONOMER-17854"/>
<dbReference type="UniPathway" id="UPA00372">
    <property type="reaction ID" value="UER00547"/>
</dbReference>
<dbReference type="UniPathway" id="UPA00713"/>
<dbReference type="GO" id="GO:0005777">
    <property type="term" value="C:peroxisome"/>
    <property type="evidence" value="ECO:0000314"/>
    <property type="project" value="UniProtKB"/>
</dbReference>
<dbReference type="GO" id="GO:0106286">
    <property type="term" value="F:(E)-caffeate-CoA ligase activity"/>
    <property type="evidence" value="ECO:0000314"/>
    <property type="project" value="UniProtKB"/>
</dbReference>
<dbReference type="GO" id="GO:0016207">
    <property type="term" value="F:4-coumarate-CoA ligase activity"/>
    <property type="evidence" value="ECO:0000314"/>
    <property type="project" value="UniProtKB"/>
</dbReference>
<dbReference type="GO" id="GO:0005524">
    <property type="term" value="F:ATP binding"/>
    <property type="evidence" value="ECO:0007669"/>
    <property type="project" value="UniProtKB-KW"/>
</dbReference>
<dbReference type="GO" id="GO:0016405">
    <property type="term" value="F:CoA-ligase activity"/>
    <property type="evidence" value="ECO:0000314"/>
    <property type="project" value="UniProtKB"/>
</dbReference>
<dbReference type="GO" id="GO:0106290">
    <property type="term" value="F:trans-cinnamate-CoA ligase activity"/>
    <property type="evidence" value="ECO:0000314"/>
    <property type="project" value="UniProtKB"/>
</dbReference>
<dbReference type="GO" id="GO:0009800">
    <property type="term" value="P:cinnamic acid biosynthetic process"/>
    <property type="evidence" value="ECO:0007669"/>
    <property type="project" value="UniProtKB-UniPathway"/>
</dbReference>
<dbReference type="GO" id="GO:0009803">
    <property type="term" value="P:cinnamic acid metabolic process"/>
    <property type="evidence" value="ECO:0000314"/>
    <property type="project" value="UniProtKB"/>
</dbReference>
<dbReference type="GO" id="GO:0007623">
    <property type="term" value="P:circadian rhythm"/>
    <property type="evidence" value="ECO:0000270"/>
    <property type="project" value="UniProtKB"/>
</dbReference>
<dbReference type="GO" id="GO:0010597">
    <property type="term" value="P:green leaf volatile biosynthetic process"/>
    <property type="evidence" value="ECO:0000315"/>
    <property type="project" value="UniProtKB"/>
</dbReference>
<dbReference type="GO" id="GO:0009698">
    <property type="term" value="P:phenylpropanoid metabolic process"/>
    <property type="evidence" value="ECO:0000314"/>
    <property type="project" value="UniProtKB"/>
</dbReference>
<dbReference type="GO" id="GO:0052315">
    <property type="term" value="P:phytoalexin biosynthetic process"/>
    <property type="evidence" value="ECO:0000314"/>
    <property type="project" value="UniProtKB"/>
</dbReference>
<dbReference type="GO" id="GO:0009723">
    <property type="term" value="P:response to ethylene"/>
    <property type="evidence" value="ECO:0000270"/>
    <property type="project" value="UniProtKB"/>
</dbReference>
<dbReference type="CDD" id="cd12118">
    <property type="entry name" value="ttLC_FACS_AEE21_like"/>
    <property type="match status" value="1"/>
</dbReference>
<dbReference type="FunFam" id="3.30.300.30:FF:000008">
    <property type="entry name" value="2,3-dihydroxybenzoate-AMP ligase"/>
    <property type="match status" value="1"/>
</dbReference>
<dbReference type="FunFam" id="3.40.50.12780:FF:000003">
    <property type="entry name" value="Long-chain-fatty-acid--CoA ligase FadD"/>
    <property type="match status" value="1"/>
</dbReference>
<dbReference type="Gene3D" id="3.30.300.30">
    <property type="match status" value="1"/>
</dbReference>
<dbReference type="Gene3D" id="3.40.50.12780">
    <property type="entry name" value="N-terminal domain of ligase-like"/>
    <property type="match status" value="1"/>
</dbReference>
<dbReference type="InterPro" id="IPR025110">
    <property type="entry name" value="AMP-bd_C"/>
</dbReference>
<dbReference type="InterPro" id="IPR045851">
    <property type="entry name" value="AMP-bd_C_sf"/>
</dbReference>
<dbReference type="InterPro" id="IPR020845">
    <property type="entry name" value="AMP-binding_CS"/>
</dbReference>
<dbReference type="InterPro" id="IPR000873">
    <property type="entry name" value="AMP-dep_synth/lig_dom"/>
</dbReference>
<dbReference type="InterPro" id="IPR042099">
    <property type="entry name" value="ANL_N_sf"/>
</dbReference>
<dbReference type="NCBIfam" id="NF006020">
    <property type="entry name" value="PRK08162.1"/>
    <property type="match status" value="1"/>
</dbReference>
<dbReference type="PANTHER" id="PTHR43859">
    <property type="entry name" value="ACYL-ACTIVATING ENZYME"/>
    <property type="match status" value="1"/>
</dbReference>
<dbReference type="PANTHER" id="PTHR43859:SF35">
    <property type="entry name" value="BUTYRATE--COA LIGASE AAE11, PEROXISOMAL-LIKE"/>
    <property type="match status" value="1"/>
</dbReference>
<dbReference type="Pfam" id="PF00501">
    <property type="entry name" value="AMP-binding"/>
    <property type="match status" value="1"/>
</dbReference>
<dbReference type="Pfam" id="PF13193">
    <property type="entry name" value="AMP-binding_C"/>
    <property type="match status" value="1"/>
</dbReference>
<dbReference type="SUPFAM" id="SSF56801">
    <property type="entry name" value="Acetyl-CoA synthetase-like"/>
    <property type="match status" value="1"/>
</dbReference>
<dbReference type="PROSITE" id="PS00455">
    <property type="entry name" value="AMP_BINDING"/>
    <property type="match status" value="1"/>
</dbReference>
<sequence>MDELPKCGANYVPLTPLTFLTRAFKSYANRTSIIYAGARFTWEQTYKRCCRLASSLQSLNIVKNDVVSVLAPNVPATYEMHFAVPMAGAVLNTINTRLDPMNIAIILKHSEAKLLFVDYEYLEKARKALELLMSTNFITAQNSKKISMPQVILIDDLYSPTRIQQQDQLEYEQLVHQGNPEYAPENIVDDEWDPIVLNYTSGTTSEPKGVVYSHRGAFLSTLNTIMGWEMGTEPVYLWSLPMFHINGWTLTWGIAARGGTNVCIRNTTAQEIYSNITLHKVTHMCCAPTVFNILLEAKPHERREITTPVQVMVGGAPPPTTLIGKIEELGFHVVHCYGITEAGGTTLVCEWQSEWNKLSREDQANLKARQGISVLALEDVDVKNSKTMQSVPHNGKTMGEICLRGSSIMKGYFKNDKANSQVFKNGWFLTGDVAVIHQDGYLEIKDRCKDIIISGGENISSIEVENAILKHPSVIEAAVVAMPHPRWGETPCAFVIKTKNPEIKEADIIVHCKKELPGFMVPKHVQFLEELPKTGTGKVKKLQLREMAKSFGIFDNANQTSQILDLPARL</sequence>
<accession>I3PB36</accession>
<accession>J9Q6B2</accession>
<evidence type="ECO:0000255" key="1"/>
<evidence type="ECO:0000269" key="2">
    <source>
    </source>
</evidence>
<evidence type="ECO:0000269" key="3">
    <source>
    </source>
</evidence>
<evidence type="ECO:0000303" key="4">
    <source>
    </source>
</evidence>
<evidence type="ECO:0000303" key="5">
    <source>
    </source>
</evidence>
<evidence type="ECO:0000305" key="6"/>
<proteinExistence type="evidence at protein level"/>